<feature type="chain" id="PRO_0000090554" description="L-rhamnose isomerase">
    <location>
        <begin position="1"/>
        <end position="419"/>
    </location>
</feature>
<feature type="binding site" evidence="1">
    <location>
        <position position="262"/>
    </location>
    <ligand>
        <name>Mn(2+)</name>
        <dbReference type="ChEBI" id="CHEBI:29035"/>
    </ligand>
</feature>
<feature type="binding site" evidence="1">
    <location>
        <position position="294"/>
    </location>
    <ligand>
        <name>Mn(2+)</name>
        <dbReference type="ChEBI" id="CHEBI:29035"/>
    </ligand>
</feature>
<feature type="binding site" evidence="1">
    <location>
        <position position="296"/>
    </location>
    <ligand>
        <name>Mn(2+)</name>
        <dbReference type="ChEBI" id="CHEBI:29035"/>
    </ligand>
</feature>
<sequence length="419" mass="47202">MTTQLEQAWELAKQRFAAVGIDVEEALRQLDRLPVSMHCWQGDDVSGFENPEGSLTGGIQATGNYPGKARNASELRADLEQAMRLIPGPKRLNLHAIYLESDTPVSRDQIKPEHFKNWVEWAKANQLGLDFNPSCFSHPLSADGFTLSHADDSIRQFWIDHCKASRRVSAYFGEQLGTPSVMNIWIPDGMKDITVDRLAPRQRLLAALDEVISEKLDPAHHIDAVESKLFGIGAESYTVGSNEFYMGYATSRQTALCLDAGHFHPTEVISDKISAAMLYVPQLLLHVSRPVRWDSDHVVLLDDETQAIASEIVRHDLFDRVHIGLDFFDASINRIAAWIIGTRNMKKALLRALLEPTAELRKLEAAGDYTARLALLEEQKSLPWQAVWEMYCQRHDTPAGSEWLESVRAYEKETLSRRG</sequence>
<accession>P58506</accession>
<reference key="1">
    <citation type="journal article" date="2001" name="Nature">
        <title>Genome sequence of enterohaemorrhagic Escherichia coli O157:H7.</title>
        <authorList>
            <person name="Perna N.T."/>
            <person name="Plunkett G. III"/>
            <person name="Burland V."/>
            <person name="Mau B."/>
            <person name="Glasner J.D."/>
            <person name="Rose D.J."/>
            <person name="Mayhew G.F."/>
            <person name="Evans P.S."/>
            <person name="Gregor J."/>
            <person name="Kirkpatrick H.A."/>
            <person name="Posfai G."/>
            <person name="Hackett J."/>
            <person name="Klink S."/>
            <person name="Boutin A."/>
            <person name="Shao Y."/>
            <person name="Miller L."/>
            <person name="Grotbeck E.J."/>
            <person name="Davis N.W."/>
            <person name="Lim A."/>
            <person name="Dimalanta E.T."/>
            <person name="Potamousis K."/>
            <person name="Apodaca J."/>
            <person name="Anantharaman T.S."/>
            <person name="Lin J."/>
            <person name="Yen G."/>
            <person name="Schwartz D.C."/>
            <person name="Welch R.A."/>
            <person name="Blattner F.R."/>
        </authorList>
    </citation>
    <scope>NUCLEOTIDE SEQUENCE [LARGE SCALE GENOMIC DNA]</scope>
    <source>
        <strain>O157:H7 / EDL933 / ATCC 700927 / EHEC</strain>
    </source>
</reference>
<reference key="2">
    <citation type="journal article" date="2001" name="DNA Res.">
        <title>Complete genome sequence of enterohemorrhagic Escherichia coli O157:H7 and genomic comparison with a laboratory strain K-12.</title>
        <authorList>
            <person name="Hayashi T."/>
            <person name="Makino K."/>
            <person name="Ohnishi M."/>
            <person name="Kurokawa K."/>
            <person name="Ishii K."/>
            <person name="Yokoyama K."/>
            <person name="Han C.-G."/>
            <person name="Ohtsubo E."/>
            <person name="Nakayama K."/>
            <person name="Murata T."/>
            <person name="Tanaka M."/>
            <person name="Tobe T."/>
            <person name="Iida T."/>
            <person name="Takami H."/>
            <person name="Honda T."/>
            <person name="Sasakawa C."/>
            <person name="Ogasawara N."/>
            <person name="Yasunaga T."/>
            <person name="Kuhara S."/>
            <person name="Shiba T."/>
            <person name="Hattori M."/>
            <person name="Shinagawa H."/>
        </authorList>
    </citation>
    <scope>NUCLEOTIDE SEQUENCE [LARGE SCALE GENOMIC DNA]</scope>
    <source>
        <strain>O157:H7 / Sakai / RIMD 0509952 / EHEC</strain>
    </source>
</reference>
<organism>
    <name type="scientific">Escherichia coli O157:H7</name>
    <dbReference type="NCBI Taxonomy" id="83334"/>
    <lineage>
        <taxon>Bacteria</taxon>
        <taxon>Pseudomonadati</taxon>
        <taxon>Pseudomonadota</taxon>
        <taxon>Gammaproteobacteria</taxon>
        <taxon>Enterobacterales</taxon>
        <taxon>Enterobacteriaceae</taxon>
        <taxon>Escherichia</taxon>
    </lineage>
</organism>
<proteinExistence type="inferred from homology"/>
<dbReference type="EC" id="5.3.1.14" evidence="1"/>
<dbReference type="EMBL" id="AE005174">
    <property type="protein sequence ID" value="AAG59097.1"/>
    <property type="molecule type" value="Genomic_DNA"/>
</dbReference>
<dbReference type="EMBL" id="BA000007">
    <property type="protein sequence ID" value="BAB38253.1"/>
    <property type="molecule type" value="Genomic_DNA"/>
</dbReference>
<dbReference type="PIR" id="E86079">
    <property type="entry name" value="E86079"/>
</dbReference>
<dbReference type="PIR" id="F91232">
    <property type="entry name" value="F91232"/>
</dbReference>
<dbReference type="RefSeq" id="NP_312857.1">
    <property type="nucleotide sequence ID" value="NC_002695.1"/>
</dbReference>
<dbReference type="RefSeq" id="WP_001301857.1">
    <property type="nucleotide sequence ID" value="NZ_VOAI01000016.1"/>
</dbReference>
<dbReference type="SMR" id="P58506"/>
<dbReference type="STRING" id="155864.Z5447"/>
<dbReference type="GeneID" id="915061"/>
<dbReference type="KEGG" id="ece:Z5447"/>
<dbReference type="KEGG" id="ecs:ECs_4830"/>
<dbReference type="PATRIC" id="fig|386585.9.peg.5047"/>
<dbReference type="eggNOG" id="COG4806">
    <property type="taxonomic scope" value="Bacteria"/>
</dbReference>
<dbReference type="HOGENOM" id="CLU_052790_0_0_6"/>
<dbReference type="OMA" id="SIHCWQG"/>
<dbReference type="UniPathway" id="UPA00541">
    <property type="reaction ID" value="UER00601"/>
</dbReference>
<dbReference type="Proteomes" id="UP000000558">
    <property type="component" value="Chromosome"/>
</dbReference>
<dbReference type="Proteomes" id="UP000002519">
    <property type="component" value="Chromosome"/>
</dbReference>
<dbReference type="GO" id="GO:0005737">
    <property type="term" value="C:cytoplasm"/>
    <property type="evidence" value="ECO:0007669"/>
    <property type="project" value="UniProtKB-SubCell"/>
</dbReference>
<dbReference type="GO" id="GO:0008740">
    <property type="term" value="F:L-rhamnose isomerase activity"/>
    <property type="evidence" value="ECO:0007669"/>
    <property type="project" value="UniProtKB-UniRule"/>
</dbReference>
<dbReference type="GO" id="GO:0030145">
    <property type="term" value="F:manganese ion binding"/>
    <property type="evidence" value="ECO:0007669"/>
    <property type="project" value="UniProtKB-UniRule"/>
</dbReference>
<dbReference type="GO" id="GO:0019324">
    <property type="term" value="P:L-lyxose metabolic process"/>
    <property type="evidence" value="ECO:0007669"/>
    <property type="project" value="TreeGrafter"/>
</dbReference>
<dbReference type="GO" id="GO:0019301">
    <property type="term" value="P:rhamnose catabolic process"/>
    <property type="evidence" value="ECO:0007669"/>
    <property type="project" value="UniProtKB-UniRule"/>
</dbReference>
<dbReference type="FunFam" id="3.20.20.150:FF:000006">
    <property type="entry name" value="L-rhamnose isomerase"/>
    <property type="match status" value="1"/>
</dbReference>
<dbReference type="Gene3D" id="3.20.20.150">
    <property type="entry name" value="Divalent-metal-dependent TIM barrel enzymes"/>
    <property type="match status" value="1"/>
</dbReference>
<dbReference type="HAMAP" id="MF_00541">
    <property type="entry name" value="RhaA"/>
    <property type="match status" value="1"/>
</dbReference>
<dbReference type="InterPro" id="IPR050337">
    <property type="entry name" value="L-rhamnose_isomerase"/>
</dbReference>
<dbReference type="InterPro" id="IPR009308">
    <property type="entry name" value="Rhamnose_isomerase"/>
</dbReference>
<dbReference type="InterPro" id="IPR036237">
    <property type="entry name" value="Xyl_isomerase-like_sf"/>
</dbReference>
<dbReference type="NCBIfam" id="NF002203">
    <property type="entry name" value="PRK01076.1"/>
    <property type="match status" value="1"/>
</dbReference>
<dbReference type="NCBIfam" id="TIGR01748">
    <property type="entry name" value="rhaA"/>
    <property type="match status" value="1"/>
</dbReference>
<dbReference type="PANTHER" id="PTHR30268">
    <property type="entry name" value="L-RHAMNOSE ISOMERASE"/>
    <property type="match status" value="1"/>
</dbReference>
<dbReference type="PANTHER" id="PTHR30268:SF0">
    <property type="entry name" value="L-RHAMNOSE ISOMERASE"/>
    <property type="match status" value="1"/>
</dbReference>
<dbReference type="Pfam" id="PF06134">
    <property type="entry name" value="RhaA"/>
    <property type="match status" value="1"/>
</dbReference>
<dbReference type="SUPFAM" id="SSF51658">
    <property type="entry name" value="Xylose isomerase-like"/>
    <property type="match status" value="1"/>
</dbReference>
<evidence type="ECO:0000255" key="1">
    <source>
        <dbReference type="HAMAP-Rule" id="MF_00541"/>
    </source>
</evidence>
<protein>
    <recommendedName>
        <fullName evidence="1">L-rhamnose isomerase</fullName>
        <ecNumber evidence="1">5.3.1.14</ecNumber>
    </recommendedName>
</protein>
<keyword id="KW-0963">Cytoplasm</keyword>
<keyword id="KW-0413">Isomerase</keyword>
<keyword id="KW-0464">Manganese</keyword>
<keyword id="KW-0479">Metal-binding</keyword>
<keyword id="KW-1185">Reference proteome</keyword>
<keyword id="KW-0684">Rhamnose metabolism</keyword>
<comment type="function">
    <text evidence="1">Catalyzes the interconversion of L-rhamnose and L-rhamnulose.</text>
</comment>
<comment type="catalytic activity">
    <reaction evidence="1">
        <text>L-rhamnopyranose = L-rhamnulose</text>
        <dbReference type="Rhea" id="RHEA:23160"/>
        <dbReference type="ChEBI" id="CHEBI:17897"/>
        <dbReference type="ChEBI" id="CHEBI:62346"/>
        <dbReference type="EC" id="5.3.1.14"/>
    </reaction>
</comment>
<comment type="cofactor">
    <cofactor evidence="1">
        <name>Mn(2+)</name>
        <dbReference type="ChEBI" id="CHEBI:29035"/>
    </cofactor>
    <text evidence="1">Binds 1 Mn(2+) ion per subunit.</text>
</comment>
<comment type="pathway">
    <text evidence="1">Carbohydrate degradation; L-rhamnose degradation; glycerone phosphate from L-rhamnose: step 1/3.</text>
</comment>
<comment type="subunit">
    <text evidence="1">Homotetramer.</text>
</comment>
<comment type="subcellular location">
    <subcellularLocation>
        <location evidence="1">Cytoplasm</location>
    </subcellularLocation>
</comment>
<comment type="similarity">
    <text evidence="1">Belongs to the rhamnose isomerase family.</text>
</comment>
<name>RHAA_ECO57</name>
<gene>
    <name evidence="1" type="primary">rhaA</name>
    <name type="ordered locus">Z5447</name>
    <name type="ordered locus">ECs4830</name>
</gene>